<name>ATPD_CYAP4</name>
<accession>B8HPK0</accession>
<protein>
    <recommendedName>
        <fullName evidence="1">ATP synthase subunit delta</fullName>
    </recommendedName>
    <alternativeName>
        <fullName evidence="1">ATP synthase F(1) sector subunit delta</fullName>
    </alternativeName>
    <alternativeName>
        <fullName evidence="1">F-type ATPase subunit delta</fullName>
        <shortName evidence="1">F-ATPase subunit delta</shortName>
    </alternativeName>
</protein>
<proteinExistence type="inferred from homology"/>
<comment type="function">
    <text evidence="1">F(1)F(0) ATP synthase produces ATP from ADP in the presence of a proton or sodium gradient. F-type ATPases consist of two structural domains, F(1) containing the extramembraneous catalytic core and F(0) containing the membrane proton channel, linked together by a central stalk and a peripheral stalk. During catalysis, ATP synthesis in the catalytic domain of F(1) is coupled via a rotary mechanism of the central stalk subunits to proton translocation.</text>
</comment>
<comment type="function">
    <text evidence="1">This protein is part of the stalk that links CF(0) to CF(1). It either transmits conformational changes from CF(0) to CF(1) or is implicated in proton conduction.</text>
</comment>
<comment type="subunit">
    <text evidence="1">F-type ATPases have 2 components, F(1) - the catalytic core - and F(0) - the membrane proton channel. F(1) has five subunits: alpha(3), beta(3), gamma(1), delta(1), epsilon(1). CF(0) has four main subunits: a(1), b(1), b'(1) and c(10-14). The alpha and beta chains form an alternating ring which encloses part of the gamma chain. F(1) is attached to F(0) by a central stalk formed by the gamma and epsilon chains, while a peripheral stalk is formed by the delta, b and b' chains.</text>
</comment>
<comment type="subcellular location">
    <subcellularLocation>
        <location evidence="1">Cellular thylakoid membrane</location>
        <topology evidence="1">Peripheral membrane protein</topology>
    </subcellularLocation>
</comment>
<comment type="similarity">
    <text evidence="1">Belongs to the ATPase delta chain family.</text>
</comment>
<evidence type="ECO:0000255" key="1">
    <source>
        <dbReference type="HAMAP-Rule" id="MF_01416"/>
    </source>
</evidence>
<organism>
    <name type="scientific">Cyanothece sp. (strain PCC 7425 / ATCC 29141)</name>
    <dbReference type="NCBI Taxonomy" id="395961"/>
    <lineage>
        <taxon>Bacteria</taxon>
        <taxon>Bacillati</taxon>
        <taxon>Cyanobacteriota</taxon>
        <taxon>Cyanophyceae</taxon>
        <taxon>Gomontiellales</taxon>
        <taxon>Cyanothecaceae</taxon>
        <taxon>Cyanothece</taxon>
    </lineage>
</organism>
<keyword id="KW-0066">ATP synthesis</keyword>
<keyword id="KW-0139">CF(1)</keyword>
<keyword id="KW-0375">Hydrogen ion transport</keyword>
<keyword id="KW-0406">Ion transport</keyword>
<keyword id="KW-0472">Membrane</keyword>
<keyword id="KW-0793">Thylakoid</keyword>
<keyword id="KW-0813">Transport</keyword>
<sequence length="185" mass="20668">MKQTTVGAEILEPYAEALMSLAQSNNLTGRFGEDVAFILDLLKTSPELQQVLANPFVKPESKKAILRQLVAPQVHDFVLKFLLLLVDRRRIFLLEPICKQFQALLRKLTNTVLAEVTSVVELTEPQRQAVIEKVKTMTGSQQVELETRLDPELIGGVIVKVGSQVLDSSIRGQLRRISNTLTSFT</sequence>
<dbReference type="EMBL" id="CP001344">
    <property type="protein sequence ID" value="ACL43861.1"/>
    <property type="molecule type" value="Genomic_DNA"/>
</dbReference>
<dbReference type="SMR" id="B8HPK0"/>
<dbReference type="STRING" id="395961.Cyan7425_1491"/>
<dbReference type="KEGG" id="cyn:Cyan7425_1491"/>
<dbReference type="eggNOG" id="COG0712">
    <property type="taxonomic scope" value="Bacteria"/>
</dbReference>
<dbReference type="HOGENOM" id="CLU_085114_4_0_3"/>
<dbReference type="OrthoDB" id="9802471at2"/>
<dbReference type="GO" id="GO:0031676">
    <property type="term" value="C:plasma membrane-derived thylakoid membrane"/>
    <property type="evidence" value="ECO:0007669"/>
    <property type="project" value="UniProtKB-SubCell"/>
</dbReference>
<dbReference type="GO" id="GO:0045259">
    <property type="term" value="C:proton-transporting ATP synthase complex"/>
    <property type="evidence" value="ECO:0007669"/>
    <property type="project" value="UniProtKB-KW"/>
</dbReference>
<dbReference type="GO" id="GO:0046933">
    <property type="term" value="F:proton-transporting ATP synthase activity, rotational mechanism"/>
    <property type="evidence" value="ECO:0007669"/>
    <property type="project" value="UniProtKB-UniRule"/>
</dbReference>
<dbReference type="Gene3D" id="1.10.520.20">
    <property type="entry name" value="N-terminal domain of the delta subunit of the F1F0-ATP synthase"/>
    <property type="match status" value="1"/>
</dbReference>
<dbReference type="HAMAP" id="MF_01416">
    <property type="entry name" value="ATP_synth_delta_bact"/>
    <property type="match status" value="1"/>
</dbReference>
<dbReference type="InterPro" id="IPR026015">
    <property type="entry name" value="ATP_synth_OSCP/delta_N_sf"/>
</dbReference>
<dbReference type="InterPro" id="IPR020781">
    <property type="entry name" value="ATPase_OSCP/d_CS"/>
</dbReference>
<dbReference type="InterPro" id="IPR000711">
    <property type="entry name" value="ATPase_OSCP/dsu"/>
</dbReference>
<dbReference type="NCBIfam" id="TIGR01145">
    <property type="entry name" value="ATP_synt_delta"/>
    <property type="match status" value="1"/>
</dbReference>
<dbReference type="PANTHER" id="PTHR11910">
    <property type="entry name" value="ATP SYNTHASE DELTA CHAIN"/>
    <property type="match status" value="1"/>
</dbReference>
<dbReference type="Pfam" id="PF00213">
    <property type="entry name" value="OSCP"/>
    <property type="match status" value="1"/>
</dbReference>
<dbReference type="PRINTS" id="PR00125">
    <property type="entry name" value="ATPASEDELTA"/>
</dbReference>
<dbReference type="SUPFAM" id="SSF47928">
    <property type="entry name" value="N-terminal domain of the delta subunit of the F1F0-ATP synthase"/>
    <property type="match status" value="1"/>
</dbReference>
<dbReference type="PROSITE" id="PS00389">
    <property type="entry name" value="ATPASE_DELTA"/>
    <property type="match status" value="1"/>
</dbReference>
<feature type="chain" id="PRO_0000370957" description="ATP synthase subunit delta">
    <location>
        <begin position="1"/>
        <end position="185"/>
    </location>
</feature>
<reference key="1">
    <citation type="journal article" date="2011" name="MBio">
        <title>Novel metabolic attributes of the genus Cyanothece, comprising a group of unicellular nitrogen-fixing Cyanobacteria.</title>
        <authorList>
            <person name="Bandyopadhyay A."/>
            <person name="Elvitigala T."/>
            <person name="Welsh E."/>
            <person name="Stockel J."/>
            <person name="Liberton M."/>
            <person name="Min H."/>
            <person name="Sherman L.A."/>
            <person name="Pakrasi H.B."/>
        </authorList>
    </citation>
    <scope>NUCLEOTIDE SEQUENCE [LARGE SCALE GENOMIC DNA]</scope>
    <source>
        <strain>PCC 7425 / ATCC 29141</strain>
    </source>
</reference>
<gene>
    <name evidence="1" type="primary">atpH</name>
    <name evidence="1" type="synonym">atpD</name>
    <name type="ordered locus">Cyan7425_1491</name>
</gene>